<name>METE_BURM9</name>
<gene>
    <name evidence="1" type="primary">metE</name>
    <name type="ordered locus">BMA10229_A0988</name>
</gene>
<accession>A2S4V8</accession>
<dbReference type="EC" id="2.1.1.14" evidence="1"/>
<dbReference type="EMBL" id="CP000546">
    <property type="protein sequence ID" value="ABN02708.1"/>
    <property type="molecule type" value="Genomic_DNA"/>
</dbReference>
<dbReference type="RefSeq" id="WP_004189599.1">
    <property type="nucleotide sequence ID" value="NC_008836.1"/>
</dbReference>
<dbReference type="SMR" id="A2S4V8"/>
<dbReference type="GeneID" id="92978235"/>
<dbReference type="KEGG" id="bml:BMA10229_A0988"/>
<dbReference type="HOGENOM" id="CLU_013175_0_0_4"/>
<dbReference type="UniPathway" id="UPA00051">
    <property type="reaction ID" value="UER00082"/>
</dbReference>
<dbReference type="Proteomes" id="UP000002283">
    <property type="component" value="Chromosome I"/>
</dbReference>
<dbReference type="GO" id="GO:0003871">
    <property type="term" value="F:5-methyltetrahydropteroyltriglutamate-homocysteine S-methyltransferase activity"/>
    <property type="evidence" value="ECO:0007669"/>
    <property type="project" value="UniProtKB-UniRule"/>
</dbReference>
<dbReference type="GO" id="GO:0008270">
    <property type="term" value="F:zinc ion binding"/>
    <property type="evidence" value="ECO:0007669"/>
    <property type="project" value="InterPro"/>
</dbReference>
<dbReference type="GO" id="GO:0009086">
    <property type="term" value="P:methionine biosynthetic process"/>
    <property type="evidence" value="ECO:0007669"/>
    <property type="project" value="UniProtKB-UniRule"/>
</dbReference>
<dbReference type="GO" id="GO:0032259">
    <property type="term" value="P:methylation"/>
    <property type="evidence" value="ECO:0007669"/>
    <property type="project" value="UniProtKB-KW"/>
</dbReference>
<dbReference type="CDD" id="cd03311">
    <property type="entry name" value="CIMS_C_terminal_like"/>
    <property type="match status" value="1"/>
</dbReference>
<dbReference type="CDD" id="cd03312">
    <property type="entry name" value="CIMS_N_terminal_like"/>
    <property type="match status" value="1"/>
</dbReference>
<dbReference type="Gene3D" id="3.20.20.210">
    <property type="match status" value="2"/>
</dbReference>
<dbReference type="HAMAP" id="MF_00172">
    <property type="entry name" value="Meth_synth"/>
    <property type="match status" value="1"/>
</dbReference>
<dbReference type="InterPro" id="IPR013215">
    <property type="entry name" value="Cbl-indep_Met_Synth_N"/>
</dbReference>
<dbReference type="InterPro" id="IPR006276">
    <property type="entry name" value="Cobalamin-indep_Met_synthase"/>
</dbReference>
<dbReference type="InterPro" id="IPR002629">
    <property type="entry name" value="Met_Synth_C/arc"/>
</dbReference>
<dbReference type="InterPro" id="IPR038071">
    <property type="entry name" value="UROD/MetE-like_sf"/>
</dbReference>
<dbReference type="NCBIfam" id="TIGR01371">
    <property type="entry name" value="met_syn_B12ind"/>
    <property type="match status" value="1"/>
</dbReference>
<dbReference type="NCBIfam" id="NF003556">
    <property type="entry name" value="PRK05222.1"/>
    <property type="match status" value="1"/>
</dbReference>
<dbReference type="PANTHER" id="PTHR30519">
    <property type="entry name" value="5-METHYLTETRAHYDROPTEROYLTRIGLUTAMATE--HOMOCYSTEINE METHYLTRANSFERASE"/>
    <property type="match status" value="1"/>
</dbReference>
<dbReference type="Pfam" id="PF08267">
    <property type="entry name" value="Meth_synt_1"/>
    <property type="match status" value="1"/>
</dbReference>
<dbReference type="Pfam" id="PF01717">
    <property type="entry name" value="Meth_synt_2"/>
    <property type="match status" value="1"/>
</dbReference>
<dbReference type="PIRSF" id="PIRSF000382">
    <property type="entry name" value="MeTrfase_B12_ind"/>
    <property type="match status" value="1"/>
</dbReference>
<dbReference type="SUPFAM" id="SSF51726">
    <property type="entry name" value="UROD/MetE-like"/>
    <property type="match status" value="2"/>
</dbReference>
<comment type="function">
    <text evidence="1">Catalyzes the transfer of a methyl group from 5-methyltetrahydrofolate to homocysteine resulting in methionine formation.</text>
</comment>
<comment type="catalytic activity">
    <reaction evidence="1">
        <text>5-methyltetrahydropteroyltri-L-glutamate + L-homocysteine = tetrahydropteroyltri-L-glutamate + L-methionine</text>
        <dbReference type="Rhea" id="RHEA:21196"/>
        <dbReference type="ChEBI" id="CHEBI:57844"/>
        <dbReference type="ChEBI" id="CHEBI:58140"/>
        <dbReference type="ChEBI" id="CHEBI:58199"/>
        <dbReference type="ChEBI" id="CHEBI:58207"/>
        <dbReference type="EC" id="2.1.1.14"/>
    </reaction>
</comment>
<comment type="cofactor">
    <cofactor evidence="1">
        <name>Zn(2+)</name>
        <dbReference type="ChEBI" id="CHEBI:29105"/>
    </cofactor>
    <text evidence="1">Binds 1 zinc ion per subunit.</text>
</comment>
<comment type="pathway">
    <text evidence="1">Amino-acid biosynthesis; L-methionine biosynthesis via de novo pathway; L-methionine from L-homocysteine (MetE route): step 1/1.</text>
</comment>
<comment type="similarity">
    <text evidence="1">Belongs to the vitamin-B12 independent methionine synthase family.</text>
</comment>
<protein>
    <recommendedName>
        <fullName evidence="1">5-methyltetrahydropteroyltriglutamate--homocysteine methyltransferase</fullName>
        <ecNumber evidence="1">2.1.1.14</ecNumber>
    </recommendedName>
    <alternativeName>
        <fullName evidence="1">Cobalamin-independent methionine synthase</fullName>
    </alternativeName>
    <alternativeName>
        <fullName evidence="1">Methionine synthase, vitamin-B12 independent isozyme</fullName>
    </alternativeName>
</protein>
<reference key="1">
    <citation type="journal article" date="2010" name="Genome Biol. Evol.">
        <title>Continuing evolution of Burkholderia mallei through genome reduction and large-scale rearrangements.</title>
        <authorList>
            <person name="Losada L."/>
            <person name="Ronning C.M."/>
            <person name="DeShazer D."/>
            <person name="Woods D."/>
            <person name="Fedorova N."/>
            <person name="Kim H.S."/>
            <person name="Shabalina S.A."/>
            <person name="Pearson T.R."/>
            <person name="Brinkac L."/>
            <person name="Tan P."/>
            <person name="Nandi T."/>
            <person name="Crabtree J."/>
            <person name="Badger J."/>
            <person name="Beckstrom-Sternberg S."/>
            <person name="Saqib M."/>
            <person name="Schutzer S.E."/>
            <person name="Keim P."/>
            <person name="Nierman W.C."/>
        </authorList>
    </citation>
    <scope>NUCLEOTIDE SEQUENCE [LARGE SCALE GENOMIC DNA]</scope>
    <source>
        <strain>NCTC 10229</strain>
    </source>
</reference>
<feature type="chain" id="PRO_1000071601" description="5-methyltetrahydropteroyltriglutamate--homocysteine methyltransferase">
    <location>
        <begin position="1"/>
        <end position="764"/>
    </location>
</feature>
<feature type="active site" description="Proton donor" evidence="1">
    <location>
        <position position="698"/>
    </location>
</feature>
<feature type="binding site" evidence="1">
    <location>
        <begin position="16"/>
        <end position="19"/>
    </location>
    <ligand>
        <name>5-methyltetrahydropteroyltri-L-glutamate</name>
        <dbReference type="ChEBI" id="CHEBI:58207"/>
    </ligand>
</feature>
<feature type="binding site" evidence="1">
    <location>
        <position position="115"/>
    </location>
    <ligand>
        <name>5-methyltetrahydropteroyltri-L-glutamate</name>
        <dbReference type="ChEBI" id="CHEBI:58207"/>
    </ligand>
</feature>
<feature type="binding site" evidence="1">
    <location>
        <begin position="435"/>
        <end position="437"/>
    </location>
    <ligand>
        <name>L-homocysteine</name>
        <dbReference type="ChEBI" id="CHEBI:58199"/>
    </ligand>
</feature>
<feature type="binding site" evidence="1">
    <location>
        <begin position="435"/>
        <end position="437"/>
    </location>
    <ligand>
        <name>L-methionine</name>
        <dbReference type="ChEBI" id="CHEBI:57844"/>
    </ligand>
</feature>
<feature type="binding site" evidence="1">
    <location>
        <position position="488"/>
    </location>
    <ligand>
        <name>L-homocysteine</name>
        <dbReference type="ChEBI" id="CHEBI:58199"/>
    </ligand>
</feature>
<feature type="binding site" evidence="1">
    <location>
        <position position="488"/>
    </location>
    <ligand>
        <name>L-methionine</name>
        <dbReference type="ChEBI" id="CHEBI:57844"/>
    </ligand>
</feature>
<feature type="binding site" evidence="1">
    <location>
        <begin position="519"/>
        <end position="520"/>
    </location>
    <ligand>
        <name>5-methyltetrahydropteroyltri-L-glutamate</name>
        <dbReference type="ChEBI" id="CHEBI:58207"/>
    </ligand>
</feature>
<feature type="binding site" evidence="1">
    <location>
        <position position="565"/>
    </location>
    <ligand>
        <name>5-methyltetrahydropteroyltri-L-glutamate</name>
        <dbReference type="ChEBI" id="CHEBI:58207"/>
    </ligand>
</feature>
<feature type="binding site" evidence="1">
    <location>
        <position position="603"/>
    </location>
    <ligand>
        <name>L-homocysteine</name>
        <dbReference type="ChEBI" id="CHEBI:58199"/>
    </ligand>
</feature>
<feature type="binding site" evidence="1">
    <location>
        <position position="603"/>
    </location>
    <ligand>
        <name>L-methionine</name>
        <dbReference type="ChEBI" id="CHEBI:57844"/>
    </ligand>
</feature>
<feature type="binding site" evidence="1">
    <location>
        <position position="609"/>
    </location>
    <ligand>
        <name>5-methyltetrahydropteroyltri-L-glutamate</name>
        <dbReference type="ChEBI" id="CHEBI:58207"/>
    </ligand>
</feature>
<feature type="binding site" evidence="1">
    <location>
        <position position="645"/>
    </location>
    <ligand>
        <name>Zn(2+)</name>
        <dbReference type="ChEBI" id="CHEBI:29105"/>
        <note>catalytic</note>
    </ligand>
</feature>
<feature type="binding site" evidence="1">
    <location>
        <position position="647"/>
    </location>
    <ligand>
        <name>Zn(2+)</name>
        <dbReference type="ChEBI" id="CHEBI:29105"/>
        <note>catalytic</note>
    </ligand>
</feature>
<feature type="binding site" evidence="1">
    <location>
        <position position="669"/>
    </location>
    <ligand>
        <name>Zn(2+)</name>
        <dbReference type="ChEBI" id="CHEBI:29105"/>
        <note>catalytic</note>
    </ligand>
</feature>
<feature type="binding site" evidence="1">
    <location>
        <position position="730"/>
    </location>
    <ligand>
        <name>Zn(2+)</name>
        <dbReference type="ChEBI" id="CHEBI:29105"/>
        <note>catalytic</note>
    </ligand>
</feature>
<sequence length="764" mass="84421">MTTAHILGFPRIGAQRELKFALERYWRDGASADAERALVDTGRALRAEHWRIERDAGLDCVTVGDFAWYDHVLTTLAHVGGLPRRFGFDARALTLADYFAAARGNAAQPAMEMTKWFDTNYHYLVPEYSPATTFGPGVEWLFDEVREARALGYRAKAALVGPLTLLWLGKARDGLVERLALLPRLVPAYRALLARLREAGVDWVQIDEPIFSLDLPDAWRDAARPTYEALAPGAPKLLVATYFDDASEHAALLKALPVAGLHVDLVRADAQLDAFVADYPADKVLSCGIVDGRNVWRNDLDRSLARLAPVRDALGERLWVATSCSLLHVPVDLAHEPRLDEELKTWLAFAAQKTREVAALRDALVKGRAAVAAEFDDAAVVAAARRTSARIHNPLVKRRVAALTDADARRASAYSVRAAAQRARFGLPLLPTTTIGSFPQTPEIRRARAAFKQGVLDHLGYLEAMREQVRIAIDKQLAYGLDVLVHGEAERNDMVEYFGELLWGFAITSNGWVQSYGSRCVKPPLVYGDVYLPEPMTVGWASYAQSLSAKPVKGMLTGPVTMLQWSFVRDDQPRATTALQIALALRQETLDLEKAGIGMIQIDEPALREGLPLKARERAAYLDWAVRAFGIAASGVADDTQIHTHMCYSEFGDILPSIAALDADVISIETTRSNMELLDAFETFDYPNEIGPGVYDIHSPRVPDADEIERLILLALERIPAQRLWVNPDCGLKTREWRQVDAALAAMVDAAKRVRQKVEEAAPA</sequence>
<keyword id="KW-0028">Amino-acid biosynthesis</keyword>
<keyword id="KW-0479">Metal-binding</keyword>
<keyword id="KW-0486">Methionine biosynthesis</keyword>
<keyword id="KW-0489">Methyltransferase</keyword>
<keyword id="KW-0677">Repeat</keyword>
<keyword id="KW-0808">Transferase</keyword>
<keyword id="KW-0862">Zinc</keyword>
<proteinExistence type="inferred from homology"/>
<evidence type="ECO:0000255" key="1">
    <source>
        <dbReference type="HAMAP-Rule" id="MF_00172"/>
    </source>
</evidence>
<organism>
    <name type="scientific">Burkholderia mallei (strain NCTC 10229)</name>
    <dbReference type="NCBI Taxonomy" id="412022"/>
    <lineage>
        <taxon>Bacteria</taxon>
        <taxon>Pseudomonadati</taxon>
        <taxon>Pseudomonadota</taxon>
        <taxon>Betaproteobacteria</taxon>
        <taxon>Burkholderiales</taxon>
        <taxon>Burkholderiaceae</taxon>
        <taxon>Burkholderia</taxon>
        <taxon>pseudomallei group</taxon>
    </lineage>
</organism>